<evidence type="ECO:0000255" key="1"/>
<evidence type="ECO:0000305" key="2"/>
<keyword id="KW-1003">Cell membrane</keyword>
<keyword id="KW-0472">Membrane</keyword>
<keyword id="KW-1185">Reference proteome</keyword>
<keyword id="KW-0812">Transmembrane</keyword>
<keyword id="KW-1133">Transmembrane helix</keyword>
<keyword id="KW-0813">Transport</keyword>
<feature type="chain" id="PRO_0000168642" description="Uncharacterized ABC transporter permease YbbP">
    <location>
        <begin position="1"/>
        <end position="804"/>
    </location>
</feature>
<feature type="transmembrane region" description="Helical" evidence="1">
    <location>
        <begin position="15"/>
        <end position="35"/>
    </location>
</feature>
<feature type="transmembrane region" description="Helical" evidence="1">
    <location>
        <begin position="243"/>
        <end position="263"/>
    </location>
</feature>
<feature type="transmembrane region" description="Helical" evidence="1">
    <location>
        <begin position="301"/>
        <end position="321"/>
    </location>
</feature>
<feature type="transmembrane region" description="Helical" evidence="1">
    <location>
        <begin position="333"/>
        <end position="353"/>
    </location>
</feature>
<feature type="transmembrane region" description="Helical" evidence="1">
    <location>
        <begin position="381"/>
        <end position="401"/>
    </location>
</feature>
<feature type="transmembrane region" description="Helical" evidence="1">
    <location>
        <begin position="403"/>
        <end position="423"/>
    </location>
</feature>
<feature type="transmembrane region" description="Helical" evidence="1">
    <location>
        <begin position="453"/>
        <end position="473"/>
    </location>
</feature>
<feature type="transmembrane region" description="Helical" evidence="1">
    <location>
        <begin position="680"/>
        <end position="700"/>
    </location>
</feature>
<feature type="transmembrane region" description="Helical" evidence="1">
    <location>
        <begin position="734"/>
        <end position="754"/>
    </location>
</feature>
<feature type="transmembrane region" description="Helical" evidence="1">
    <location>
        <begin position="769"/>
        <end position="789"/>
    </location>
</feature>
<comment type="subcellular location">
    <subcellularLocation>
        <location evidence="2">Cell membrane</location>
        <topology evidence="2">Multi-pass membrane protein</topology>
    </subcellularLocation>
</comment>
<comment type="similarity">
    <text evidence="2">Belongs to the ABC-4 integral membrane protein family.</text>
</comment>
<reference key="1">
    <citation type="submission" date="1997-01" db="EMBL/GenBank/DDBJ databases">
        <title>Sequence of minutes 4-25 of Escherichia coli.</title>
        <authorList>
            <person name="Chung E."/>
            <person name="Allen E."/>
            <person name="Araujo R."/>
            <person name="Aparicio A.M."/>
            <person name="Davis K."/>
            <person name="Duncan M."/>
            <person name="Federspiel N."/>
            <person name="Hyman R."/>
            <person name="Kalman S."/>
            <person name="Komp C."/>
            <person name="Kurdi O."/>
            <person name="Lew H."/>
            <person name="Lin D."/>
            <person name="Namath A."/>
            <person name="Oefner P."/>
            <person name="Roberts D."/>
            <person name="Schramm S."/>
            <person name="Davis R.W."/>
        </authorList>
    </citation>
    <scope>NUCLEOTIDE SEQUENCE [LARGE SCALE GENOMIC DNA]</scope>
    <source>
        <strain>K12 / MG1655 / ATCC 47076</strain>
    </source>
</reference>
<reference key="2">
    <citation type="journal article" date="1997" name="Science">
        <title>The complete genome sequence of Escherichia coli K-12.</title>
        <authorList>
            <person name="Blattner F.R."/>
            <person name="Plunkett G. III"/>
            <person name="Bloch C.A."/>
            <person name="Perna N.T."/>
            <person name="Burland V."/>
            <person name="Riley M."/>
            <person name="Collado-Vides J."/>
            <person name="Glasner J.D."/>
            <person name="Rode C.K."/>
            <person name="Mayhew G.F."/>
            <person name="Gregor J."/>
            <person name="Davis N.W."/>
            <person name="Kirkpatrick H.A."/>
            <person name="Goeden M.A."/>
            <person name="Rose D.J."/>
            <person name="Mau B."/>
            <person name="Shao Y."/>
        </authorList>
    </citation>
    <scope>NUCLEOTIDE SEQUENCE [LARGE SCALE GENOMIC DNA]</scope>
    <source>
        <strain>K12 / MG1655 / ATCC 47076</strain>
    </source>
</reference>
<reference key="3">
    <citation type="journal article" date="2006" name="Mol. Syst. Biol.">
        <title>Highly accurate genome sequences of Escherichia coli K-12 strains MG1655 and W3110.</title>
        <authorList>
            <person name="Hayashi K."/>
            <person name="Morooka N."/>
            <person name="Yamamoto Y."/>
            <person name="Fujita K."/>
            <person name="Isono K."/>
            <person name="Choi S."/>
            <person name="Ohtsubo E."/>
            <person name="Baba T."/>
            <person name="Wanner B.L."/>
            <person name="Mori H."/>
            <person name="Horiuchi T."/>
        </authorList>
    </citation>
    <scope>NUCLEOTIDE SEQUENCE [LARGE SCALE GENOMIC DNA]</scope>
    <source>
        <strain>K12 / W3110 / ATCC 27325 / DSM 5911</strain>
    </source>
</reference>
<accession>P77504</accession>
<accession>Q2MBT1</accession>
<organism>
    <name type="scientific">Escherichia coli (strain K12)</name>
    <dbReference type="NCBI Taxonomy" id="83333"/>
    <lineage>
        <taxon>Bacteria</taxon>
        <taxon>Pseudomonadati</taxon>
        <taxon>Pseudomonadota</taxon>
        <taxon>Gammaproteobacteria</taxon>
        <taxon>Enterobacterales</taxon>
        <taxon>Enterobacteriaceae</taxon>
        <taxon>Escherichia</taxon>
    </lineage>
</organism>
<gene>
    <name type="primary">ybbP</name>
    <name type="ordered locus">b0496</name>
    <name type="ordered locus">JW0485</name>
</gene>
<protein>
    <recommendedName>
        <fullName>Uncharacterized ABC transporter permease YbbP</fullName>
    </recommendedName>
</protein>
<proteinExistence type="inferred from homology"/>
<dbReference type="EMBL" id="U82664">
    <property type="protein sequence ID" value="AAB40250.1"/>
    <property type="molecule type" value="Genomic_DNA"/>
</dbReference>
<dbReference type="EMBL" id="U00096">
    <property type="protein sequence ID" value="AAC73598.1"/>
    <property type="molecule type" value="Genomic_DNA"/>
</dbReference>
<dbReference type="EMBL" id="AP009048">
    <property type="protein sequence ID" value="BAE76275.1"/>
    <property type="molecule type" value="Genomic_DNA"/>
</dbReference>
<dbReference type="PIR" id="G64780">
    <property type="entry name" value="G64780"/>
</dbReference>
<dbReference type="RefSeq" id="NP_415029.1">
    <property type="nucleotide sequence ID" value="NC_000913.3"/>
</dbReference>
<dbReference type="RefSeq" id="WP_000561872.1">
    <property type="nucleotide sequence ID" value="NZ_LN832404.1"/>
</dbReference>
<dbReference type="SMR" id="P77504"/>
<dbReference type="BioGRID" id="4260708">
    <property type="interactions" value="31"/>
</dbReference>
<dbReference type="DIP" id="DIP-11324N"/>
<dbReference type="FunCoup" id="P77504">
    <property type="interactions" value="248"/>
</dbReference>
<dbReference type="IntAct" id="P77504">
    <property type="interactions" value="3"/>
</dbReference>
<dbReference type="STRING" id="511145.b0496"/>
<dbReference type="TCDB" id="3.A.1.122.15">
    <property type="family name" value="the atp-binding cassette (abc) superfamily"/>
</dbReference>
<dbReference type="jPOST" id="P77504"/>
<dbReference type="PaxDb" id="511145-b0496"/>
<dbReference type="EnsemblBacteria" id="AAC73598">
    <property type="protein sequence ID" value="AAC73598"/>
    <property type="gene ID" value="b0496"/>
</dbReference>
<dbReference type="GeneID" id="945118"/>
<dbReference type="KEGG" id="ecj:JW0485"/>
<dbReference type="KEGG" id="eco:b0496"/>
<dbReference type="KEGG" id="ecoc:C3026_02440"/>
<dbReference type="PATRIC" id="fig|1411691.4.peg.1780"/>
<dbReference type="EchoBASE" id="EB3051"/>
<dbReference type="eggNOG" id="COG3127">
    <property type="taxonomic scope" value="Bacteria"/>
</dbReference>
<dbReference type="HOGENOM" id="CLU_009475_2_0_6"/>
<dbReference type="InParanoid" id="P77504"/>
<dbReference type="OMA" id="LIMWRLS"/>
<dbReference type="OrthoDB" id="5292592at2"/>
<dbReference type="PhylomeDB" id="P77504"/>
<dbReference type="BioCyc" id="EcoCyc:YBBP-MONOMER"/>
<dbReference type="PRO" id="PR:P77504"/>
<dbReference type="Proteomes" id="UP000000625">
    <property type="component" value="Chromosome"/>
</dbReference>
<dbReference type="GO" id="GO:0005886">
    <property type="term" value="C:plasma membrane"/>
    <property type="evidence" value="ECO:0000314"/>
    <property type="project" value="EcoCyc"/>
</dbReference>
<dbReference type="InterPro" id="IPR003838">
    <property type="entry name" value="ABC3_permease_C"/>
</dbReference>
<dbReference type="InterPro" id="IPR038766">
    <property type="entry name" value="Membrane_comp_ABC_pdt"/>
</dbReference>
<dbReference type="InterPro" id="IPR049727">
    <property type="entry name" value="YbbP"/>
</dbReference>
<dbReference type="NCBIfam" id="NF041854">
    <property type="entry name" value="ABC_perm_YbbP"/>
    <property type="match status" value="1"/>
</dbReference>
<dbReference type="PANTHER" id="PTHR30287:SF1">
    <property type="entry name" value="INNER MEMBRANE PROTEIN"/>
    <property type="match status" value="1"/>
</dbReference>
<dbReference type="PANTHER" id="PTHR30287">
    <property type="entry name" value="MEMBRANE COMPONENT OF PREDICTED ABC SUPERFAMILY METABOLITE UPTAKE TRANSPORTER"/>
    <property type="match status" value="1"/>
</dbReference>
<dbReference type="Pfam" id="PF02687">
    <property type="entry name" value="FtsX"/>
    <property type="match status" value="2"/>
</dbReference>
<name>YBBP_ECOLI</name>
<sequence>MIARWFWREWRSPSLLIVWLALSLAVACVLALGNISDRMEKGLSQQSREFMAGDRALRSSREVPQAWLEEAQKRGLKVGKQLTFATMTFAGDTPQLANVKAVDDIYPMYGDLQTNPPGLKPQAGSVLLAPRLMALLNLKTGDTIDVGDATLRIAGEVIQEPDSGFNPFQMAPRLMMNLADVDKTGAVQPGSRVTWRYKFGGNENQLDGYEKWLLPQLKPEQRWYGLEQDEGALGRSMERSQQFLLLSALLTLLLAVAAVAVAMNHYCRSRYDLVAILKTLGAGRAQLRKLIVGQWLMVLTLSAVTGGAIGLLFENVLMVLLKPVLPAALPPASLWPWLWALGTMTVISLLVGLRPYRLLLATQPLRVLRNDVVANVWPLKFYLPIVSVVVVLLLAGLMGGSMLLWAVLAGAVVLALLCGVLGWMLLNVLRRMTLKSLPLRLAVSRLLRQPWSTLSQLSAFSLSFMLLALLLVLRGDLLDRWQQQLPPESPNYFLINIATEQVAPLKAFLAEHQIVPESFYPVVRARLTAINDKPTEGNEDEALNRELNLTWQNTRPDHNPIVAGNWPPKADEVSMEEGLAKRLNVALGDTVTFMGDTQEFRAKVTSLRKVDWESLRPNFYFIFPEGALDGQPQSWLTSFRWENGNGMLTQLNRQFPTISLLDIGAILKQVGQVLEQVSRALEVMVVLVTACGMLLLLAQVQVGMRQRHQELVVWRTLGAGKKLLRTTLWCEFAMLGFVSGLVAAIGAETALAVLQAKVFDFPWEPDWRLWIVLPCSGALLLSLFGGWLGARLVKGKALFRQFAG</sequence>